<gene>
    <name evidence="1" type="primary">rplW</name>
    <name type="ordered locus">Bpet4950</name>
</gene>
<protein>
    <recommendedName>
        <fullName evidence="1">Large ribosomal subunit protein uL23</fullName>
    </recommendedName>
    <alternativeName>
        <fullName evidence="2">50S ribosomal protein L23</fullName>
    </alternativeName>
</protein>
<keyword id="KW-0687">Ribonucleoprotein</keyword>
<keyword id="KW-0689">Ribosomal protein</keyword>
<keyword id="KW-0694">RNA-binding</keyword>
<keyword id="KW-0699">rRNA-binding</keyword>
<name>RL23_BORPD</name>
<reference key="1">
    <citation type="journal article" date="2008" name="BMC Genomics">
        <title>The missing link: Bordetella petrii is endowed with both the metabolic versatility of environmental bacteria and virulence traits of pathogenic Bordetellae.</title>
        <authorList>
            <person name="Gross R."/>
            <person name="Guzman C.A."/>
            <person name="Sebaihia M."/>
            <person name="Martin dos Santos V.A.P."/>
            <person name="Pieper D.H."/>
            <person name="Koebnik R."/>
            <person name="Lechner M."/>
            <person name="Bartels D."/>
            <person name="Buhrmester J."/>
            <person name="Choudhuri J.V."/>
            <person name="Ebensen T."/>
            <person name="Gaigalat L."/>
            <person name="Herrmann S."/>
            <person name="Khachane A.N."/>
            <person name="Larisch C."/>
            <person name="Link S."/>
            <person name="Linke B."/>
            <person name="Meyer F."/>
            <person name="Mormann S."/>
            <person name="Nakunst D."/>
            <person name="Rueckert C."/>
            <person name="Schneiker-Bekel S."/>
            <person name="Schulze K."/>
            <person name="Voerholter F.-J."/>
            <person name="Yevsa T."/>
            <person name="Engle J.T."/>
            <person name="Goldman W.E."/>
            <person name="Puehler A."/>
            <person name="Goebel U.B."/>
            <person name="Goesmann A."/>
            <person name="Bloecker H."/>
            <person name="Kaiser O."/>
            <person name="Martinez-Arias R."/>
        </authorList>
    </citation>
    <scope>NUCLEOTIDE SEQUENCE [LARGE SCALE GENOMIC DNA]</scope>
    <source>
        <strain>ATCC BAA-461 / DSM 12804 / CCUG 43448</strain>
    </source>
</reference>
<proteinExistence type="inferred from homology"/>
<accession>A9IIZ8</accession>
<dbReference type="EMBL" id="AM902716">
    <property type="protein sequence ID" value="CAP45302.1"/>
    <property type="molecule type" value="Genomic_DNA"/>
</dbReference>
<dbReference type="SMR" id="A9IIZ8"/>
<dbReference type="STRING" id="94624.Bpet4950"/>
<dbReference type="KEGG" id="bpt:Bpet4950"/>
<dbReference type="eggNOG" id="COG0089">
    <property type="taxonomic scope" value="Bacteria"/>
</dbReference>
<dbReference type="Proteomes" id="UP000001225">
    <property type="component" value="Chromosome"/>
</dbReference>
<dbReference type="GO" id="GO:1990904">
    <property type="term" value="C:ribonucleoprotein complex"/>
    <property type="evidence" value="ECO:0007669"/>
    <property type="project" value="UniProtKB-KW"/>
</dbReference>
<dbReference type="GO" id="GO:0005840">
    <property type="term" value="C:ribosome"/>
    <property type="evidence" value="ECO:0007669"/>
    <property type="project" value="UniProtKB-KW"/>
</dbReference>
<dbReference type="GO" id="GO:0019843">
    <property type="term" value="F:rRNA binding"/>
    <property type="evidence" value="ECO:0007669"/>
    <property type="project" value="UniProtKB-UniRule"/>
</dbReference>
<dbReference type="GO" id="GO:0003735">
    <property type="term" value="F:structural constituent of ribosome"/>
    <property type="evidence" value="ECO:0007669"/>
    <property type="project" value="InterPro"/>
</dbReference>
<dbReference type="GO" id="GO:0006412">
    <property type="term" value="P:translation"/>
    <property type="evidence" value="ECO:0007669"/>
    <property type="project" value="UniProtKB-UniRule"/>
</dbReference>
<dbReference type="FunFam" id="3.30.70.330:FF:000001">
    <property type="entry name" value="50S ribosomal protein L23"/>
    <property type="match status" value="1"/>
</dbReference>
<dbReference type="Gene3D" id="3.30.70.330">
    <property type="match status" value="1"/>
</dbReference>
<dbReference type="HAMAP" id="MF_01369_B">
    <property type="entry name" value="Ribosomal_uL23_B"/>
    <property type="match status" value="1"/>
</dbReference>
<dbReference type="InterPro" id="IPR012677">
    <property type="entry name" value="Nucleotide-bd_a/b_plait_sf"/>
</dbReference>
<dbReference type="InterPro" id="IPR013025">
    <property type="entry name" value="Ribosomal_uL23-like"/>
</dbReference>
<dbReference type="InterPro" id="IPR012678">
    <property type="entry name" value="Ribosomal_uL23/eL15/eS24_sf"/>
</dbReference>
<dbReference type="NCBIfam" id="NF004359">
    <property type="entry name" value="PRK05738.1-3"/>
    <property type="match status" value="1"/>
</dbReference>
<dbReference type="NCBIfam" id="NF004363">
    <property type="entry name" value="PRK05738.2-4"/>
    <property type="match status" value="1"/>
</dbReference>
<dbReference type="PANTHER" id="PTHR11620">
    <property type="entry name" value="60S RIBOSOMAL PROTEIN L23A"/>
    <property type="match status" value="1"/>
</dbReference>
<dbReference type="Pfam" id="PF00276">
    <property type="entry name" value="Ribosomal_L23"/>
    <property type="match status" value="1"/>
</dbReference>
<dbReference type="SUPFAM" id="SSF54189">
    <property type="entry name" value="Ribosomal proteins S24e, L23 and L15e"/>
    <property type="match status" value="1"/>
</dbReference>
<comment type="function">
    <text evidence="1">One of the early assembly proteins it binds 23S rRNA. One of the proteins that surrounds the polypeptide exit tunnel on the outside of the ribosome. Forms the main docking site for trigger factor binding to the ribosome.</text>
</comment>
<comment type="subunit">
    <text evidence="1">Part of the 50S ribosomal subunit. Contacts protein L29, and trigger factor when it is bound to the ribosome.</text>
</comment>
<comment type="similarity">
    <text evidence="1">Belongs to the universal ribosomal protein uL23 family.</text>
</comment>
<feature type="chain" id="PRO_1000144536" description="Large ribosomal subunit protein uL23">
    <location>
        <begin position="1"/>
        <end position="98"/>
    </location>
</feature>
<sequence length="98" mass="11146">MNAERLMQVILAPVVTEKATFVAEKNQQIAFRVVADATKPEIKAAVELLFKVQVESVQVLNRKGKVKRFGRFVGRRRSERKAYVALKEGQEIDFAEVK</sequence>
<evidence type="ECO:0000255" key="1">
    <source>
        <dbReference type="HAMAP-Rule" id="MF_01369"/>
    </source>
</evidence>
<evidence type="ECO:0000305" key="2"/>
<organism>
    <name type="scientific">Bordetella petrii (strain ATCC BAA-461 / DSM 12804 / CCUG 43448)</name>
    <dbReference type="NCBI Taxonomy" id="340100"/>
    <lineage>
        <taxon>Bacteria</taxon>
        <taxon>Pseudomonadati</taxon>
        <taxon>Pseudomonadota</taxon>
        <taxon>Betaproteobacteria</taxon>
        <taxon>Burkholderiales</taxon>
        <taxon>Alcaligenaceae</taxon>
        <taxon>Bordetella</taxon>
    </lineage>
</organism>